<keyword id="KW-0028">Amino-acid biosynthesis</keyword>
<keyword id="KW-0061">Asparagine biosynthesis</keyword>
<keyword id="KW-0067">ATP-binding</keyword>
<keyword id="KW-0963">Cytoplasm</keyword>
<keyword id="KW-0436">Ligase</keyword>
<keyword id="KW-0547">Nucleotide-binding</keyword>
<sequence length="330" mass="36651">MKTAYIAKQRQISFVKSHFSRQLEERLGLIEVQAPILSRVGDGTQDNLSGCEKAVQVKVKALPDAQFEVVHSLAKWKRQTLGQHDFSAGEGLYTHMKALRPDEDRLSPLHSVYVDQWDWERVMGDGERQFSTLKSTVEAIWAGIKATEAAVSEEFGLAPFLPDQIHFVHSQELLSRYPDLDAKGRERAIAKDLGAVFLVGIGGKLSDGHRHDVRAPDYDDWSTPSELGHAGLNGDILVWNPVLEDAFELSSMGIRVDADTLKHQLALTGDEDRLELEWHQALLRGEMPQTIGGGIGQSRLTMLLLQLPHIGQVQCGVWPAAVRESVPSLL</sequence>
<organism>
    <name type="scientific">Escherichia coli O6:K15:H31 (strain 536 / UPEC)</name>
    <dbReference type="NCBI Taxonomy" id="362663"/>
    <lineage>
        <taxon>Bacteria</taxon>
        <taxon>Pseudomonadati</taxon>
        <taxon>Pseudomonadota</taxon>
        <taxon>Gammaproteobacteria</taxon>
        <taxon>Enterobacterales</taxon>
        <taxon>Enterobacteriaceae</taxon>
        <taxon>Escherichia</taxon>
    </lineage>
</organism>
<proteinExistence type="inferred from homology"/>
<protein>
    <recommendedName>
        <fullName evidence="1">Aspartate--ammonia ligase</fullName>
        <ecNumber evidence="1">6.3.1.1</ecNumber>
    </recommendedName>
    <alternativeName>
        <fullName evidence="1">Asparagine synthetase A</fullName>
    </alternativeName>
</protein>
<comment type="catalytic activity">
    <reaction evidence="1">
        <text>L-aspartate + NH4(+) + ATP = L-asparagine + AMP + diphosphate + H(+)</text>
        <dbReference type="Rhea" id="RHEA:11372"/>
        <dbReference type="ChEBI" id="CHEBI:15378"/>
        <dbReference type="ChEBI" id="CHEBI:28938"/>
        <dbReference type="ChEBI" id="CHEBI:29991"/>
        <dbReference type="ChEBI" id="CHEBI:30616"/>
        <dbReference type="ChEBI" id="CHEBI:33019"/>
        <dbReference type="ChEBI" id="CHEBI:58048"/>
        <dbReference type="ChEBI" id="CHEBI:456215"/>
        <dbReference type="EC" id="6.3.1.1"/>
    </reaction>
</comment>
<comment type="pathway">
    <text evidence="1">Amino-acid biosynthesis; L-asparagine biosynthesis; L-asparagine from L-aspartate (ammonia route): step 1/1.</text>
</comment>
<comment type="subcellular location">
    <subcellularLocation>
        <location evidence="1">Cytoplasm</location>
    </subcellularLocation>
</comment>
<comment type="similarity">
    <text evidence="1">Belongs to the class-II aminoacyl-tRNA synthetase family. AsnA subfamily.</text>
</comment>
<reference key="1">
    <citation type="journal article" date="2006" name="Mol. Microbiol.">
        <title>Role of pathogenicity island-associated integrases in the genome plasticity of uropathogenic Escherichia coli strain 536.</title>
        <authorList>
            <person name="Hochhut B."/>
            <person name="Wilde C."/>
            <person name="Balling G."/>
            <person name="Middendorf B."/>
            <person name="Dobrindt U."/>
            <person name="Brzuszkiewicz E."/>
            <person name="Gottschalk G."/>
            <person name="Carniel E."/>
            <person name="Hacker J."/>
        </authorList>
    </citation>
    <scope>NUCLEOTIDE SEQUENCE [LARGE SCALE GENOMIC DNA]</scope>
    <source>
        <strain>536 / UPEC</strain>
    </source>
</reference>
<feature type="chain" id="PRO_1000017942" description="Aspartate--ammonia ligase">
    <location>
        <begin position="1"/>
        <end position="330"/>
    </location>
</feature>
<dbReference type="EC" id="6.3.1.1" evidence="1"/>
<dbReference type="EMBL" id="CP000247">
    <property type="protein sequence ID" value="ABG71914.1"/>
    <property type="molecule type" value="Genomic_DNA"/>
</dbReference>
<dbReference type="RefSeq" id="WP_000845104.1">
    <property type="nucleotide sequence ID" value="NC_008253.1"/>
</dbReference>
<dbReference type="SMR" id="Q0TAW5"/>
<dbReference type="KEGG" id="ecp:ECP_3943"/>
<dbReference type="HOGENOM" id="CLU_071543_0_0_6"/>
<dbReference type="UniPathway" id="UPA00134">
    <property type="reaction ID" value="UER00194"/>
</dbReference>
<dbReference type="Proteomes" id="UP000009182">
    <property type="component" value="Chromosome"/>
</dbReference>
<dbReference type="GO" id="GO:0005829">
    <property type="term" value="C:cytosol"/>
    <property type="evidence" value="ECO:0007669"/>
    <property type="project" value="TreeGrafter"/>
</dbReference>
<dbReference type="GO" id="GO:0004071">
    <property type="term" value="F:aspartate-ammonia ligase activity"/>
    <property type="evidence" value="ECO:0007669"/>
    <property type="project" value="UniProtKB-UniRule"/>
</dbReference>
<dbReference type="GO" id="GO:0005524">
    <property type="term" value="F:ATP binding"/>
    <property type="evidence" value="ECO:0007669"/>
    <property type="project" value="UniProtKB-UniRule"/>
</dbReference>
<dbReference type="GO" id="GO:0070981">
    <property type="term" value="P:L-asparagine biosynthetic process"/>
    <property type="evidence" value="ECO:0007669"/>
    <property type="project" value="UniProtKB-UniRule"/>
</dbReference>
<dbReference type="CDD" id="cd00645">
    <property type="entry name" value="AsnA"/>
    <property type="match status" value="1"/>
</dbReference>
<dbReference type="FunFam" id="3.30.930.10:FF:000025">
    <property type="entry name" value="Aspartate--ammonia ligase"/>
    <property type="match status" value="1"/>
</dbReference>
<dbReference type="Gene3D" id="3.30.930.10">
    <property type="entry name" value="Bira Bifunctional Protein, Domain 2"/>
    <property type="match status" value="1"/>
</dbReference>
<dbReference type="HAMAP" id="MF_00555">
    <property type="entry name" value="AsnA"/>
    <property type="match status" value="1"/>
</dbReference>
<dbReference type="InterPro" id="IPR006195">
    <property type="entry name" value="aa-tRNA-synth_II"/>
</dbReference>
<dbReference type="InterPro" id="IPR045864">
    <property type="entry name" value="aa-tRNA-synth_II/BPL/LPL"/>
</dbReference>
<dbReference type="InterPro" id="IPR004618">
    <property type="entry name" value="AsnA"/>
</dbReference>
<dbReference type="NCBIfam" id="TIGR00669">
    <property type="entry name" value="asnA"/>
    <property type="match status" value="1"/>
</dbReference>
<dbReference type="PANTHER" id="PTHR30073">
    <property type="entry name" value="ASPARTATE--AMMONIA LIGASE"/>
    <property type="match status" value="1"/>
</dbReference>
<dbReference type="PANTHER" id="PTHR30073:SF5">
    <property type="entry name" value="ASPARTATE--AMMONIA LIGASE"/>
    <property type="match status" value="1"/>
</dbReference>
<dbReference type="Pfam" id="PF03590">
    <property type="entry name" value="AsnA"/>
    <property type="match status" value="1"/>
</dbReference>
<dbReference type="PIRSF" id="PIRSF001555">
    <property type="entry name" value="Asp_ammon_ligase"/>
    <property type="match status" value="1"/>
</dbReference>
<dbReference type="SUPFAM" id="SSF55681">
    <property type="entry name" value="Class II aaRS and biotin synthetases"/>
    <property type="match status" value="1"/>
</dbReference>
<dbReference type="PROSITE" id="PS50862">
    <property type="entry name" value="AA_TRNA_LIGASE_II"/>
    <property type="match status" value="1"/>
</dbReference>
<gene>
    <name evidence="1" type="primary">asnA</name>
    <name type="ordered locus">ECP_3943</name>
</gene>
<name>ASNA_ECOL5</name>
<accession>Q0TAW5</accession>
<evidence type="ECO:0000255" key="1">
    <source>
        <dbReference type="HAMAP-Rule" id="MF_00555"/>
    </source>
</evidence>